<reference key="1">
    <citation type="journal article" date="2009" name="Proc. Natl. Acad. Sci. U.S.A.">
        <title>Biogeography of the Sulfolobus islandicus pan-genome.</title>
        <authorList>
            <person name="Reno M.L."/>
            <person name="Held N.L."/>
            <person name="Fields C.J."/>
            <person name="Burke P.V."/>
            <person name="Whitaker R.J."/>
        </authorList>
    </citation>
    <scope>NUCLEOTIDE SEQUENCE [LARGE SCALE GENOMIC DNA]</scope>
    <source>
        <strain>Y.N.15.51 / Yellowstone #2</strain>
    </source>
</reference>
<organism>
    <name type="scientific">Saccharolobus islandicus (strain Y.N.15.51 / Yellowstone #2)</name>
    <name type="common">Sulfolobus islandicus</name>
    <dbReference type="NCBI Taxonomy" id="419942"/>
    <lineage>
        <taxon>Archaea</taxon>
        <taxon>Thermoproteota</taxon>
        <taxon>Thermoprotei</taxon>
        <taxon>Sulfolobales</taxon>
        <taxon>Sulfolobaceae</taxon>
        <taxon>Saccharolobus</taxon>
    </lineage>
</organism>
<proteinExistence type="inferred from homology"/>
<name>LEUD_SACI1</name>
<keyword id="KW-0028">Amino-acid biosynthesis</keyword>
<keyword id="KW-0100">Branched-chain amino acid biosynthesis</keyword>
<keyword id="KW-0432">Leucine biosynthesis</keyword>
<keyword id="KW-0456">Lyase</keyword>
<comment type="function">
    <text evidence="1">Catalyzes the isomerization between 2-isopropylmalate and 3-isopropylmalate, via the formation of 2-isopropylmaleate.</text>
</comment>
<comment type="catalytic activity">
    <reaction evidence="1">
        <text>(2R,3S)-3-isopropylmalate = (2S)-2-isopropylmalate</text>
        <dbReference type="Rhea" id="RHEA:32287"/>
        <dbReference type="ChEBI" id="CHEBI:1178"/>
        <dbReference type="ChEBI" id="CHEBI:35121"/>
        <dbReference type="EC" id="4.2.1.33"/>
    </reaction>
</comment>
<comment type="pathway">
    <text evidence="1">Amino-acid biosynthesis; L-leucine biosynthesis; L-leucine from 3-methyl-2-oxobutanoate: step 2/4.</text>
</comment>
<comment type="subunit">
    <text evidence="1">Heterodimer of LeuC and LeuD.</text>
</comment>
<comment type="similarity">
    <text evidence="1">Belongs to the LeuD family. LeuD type 2 subfamily.</text>
</comment>
<evidence type="ECO:0000255" key="1">
    <source>
        <dbReference type="HAMAP-Rule" id="MF_01032"/>
    </source>
</evidence>
<accession>C3NMW1</accession>
<dbReference type="EC" id="4.2.1.33" evidence="1"/>
<dbReference type="EMBL" id="CP001404">
    <property type="protein sequence ID" value="ACP49768.1"/>
    <property type="molecule type" value="Genomic_DNA"/>
</dbReference>
<dbReference type="RefSeq" id="WP_012718134.1">
    <property type="nucleotide sequence ID" value="NC_012623.1"/>
</dbReference>
<dbReference type="SMR" id="C3NMW1"/>
<dbReference type="GeneID" id="7808859"/>
<dbReference type="KEGG" id="sin:YN1551_2866"/>
<dbReference type="HOGENOM" id="CLU_081378_1_1_2"/>
<dbReference type="UniPathway" id="UPA00048">
    <property type="reaction ID" value="UER00071"/>
</dbReference>
<dbReference type="Proteomes" id="UP000006818">
    <property type="component" value="Chromosome"/>
</dbReference>
<dbReference type="GO" id="GO:0003861">
    <property type="term" value="F:3-isopropylmalate dehydratase activity"/>
    <property type="evidence" value="ECO:0007669"/>
    <property type="project" value="UniProtKB-UniRule"/>
</dbReference>
<dbReference type="GO" id="GO:0009098">
    <property type="term" value="P:L-leucine biosynthetic process"/>
    <property type="evidence" value="ECO:0007669"/>
    <property type="project" value="UniProtKB-UniRule"/>
</dbReference>
<dbReference type="CDD" id="cd01577">
    <property type="entry name" value="IPMI_Swivel"/>
    <property type="match status" value="1"/>
</dbReference>
<dbReference type="Gene3D" id="3.20.19.10">
    <property type="entry name" value="Aconitase, domain 4"/>
    <property type="match status" value="1"/>
</dbReference>
<dbReference type="HAMAP" id="MF_01032">
    <property type="entry name" value="LeuD_type2"/>
    <property type="match status" value="1"/>
</dbReference>
<dbReference type="InterPro" id="IPR015928">
    <property type="entry name" value="Aconitase/3IPM_dehydase_swvl"/>
</dbReference>
<dbReference type="InterPro" id="IPR000573">
    <property type="entry name" value="AconitaseA/IPMdHydase_ssu_swvl"/>
</dbReference>
<dbReference type="InterPro" id="IPR033940">
    <property type="entry name" value="IPMI_Swivel"/>
</dbReference>
<dbReference type="InterPro" id="IPR050075">
    <property type="entry name" value="LeuD"/>
</dbReference>
<dbReference type="InterPro" id="IPR011827">
    <property type="entry name" value="LeuD_type2/HacB/DmdB"/>
</dbReference>
<dbReference type="NCBIfam" id="TIGR02087">
    <property type="entry name" value="LEUD_arch"/>
    <property type="match status" value="1"/>
</dbReference>
<dbReference type="PANTHER" id="PTHR43345:SF2">
    <property type="entry name" value="3-ISOPROPYLMALATE DEHYDRATASE SMALL SUBUNIT 1"/>
    <property type="match status" value="1"/>
</dbReference>
<dbReference type="PANTHER" id="PTHR43345">
    <property type="entry name" value="3-ISOPROPYLMALATE DEHYDRATASE SMALL SUBUNIT 2-RELATED-RELATED"/>
    <property type="match status" value="1"/>
</dbReference>
<dbReference type="Pfam" id="PF00694">
    <property type="entry name" value="Aconitase_C"/>
    <property type="match status" value="1"/>
</dbReference>
<dbReference type="SUPFAM" id="SSF52016">
    <property type="entry name" value="LeuD/IlvD-like"/>
    <property type="match status" value="1"/>
</dbReference>
<gene>
    <name evidence="1" type="primary">leuD</name>
    <name type="ordered locus">YN1551_2866</name>
</gene>
<protein>
    <recommendedName>
        <fullName evidence="1">3-isopropylmalate dehydratase small subunit</fullName>
        <ecNumber evidence="1">4.2.1.33</ecNumber>
    </recommendedName>
    <alternativeName>
        <fullName evidence="1">Alpha-IPM isomerase</fullName>
        <shortName evidence="1">IPMI</shortName>
    </alternativeName>
    <alternativeName>
        <fullName evidence="1">Isopropylmalate isomerase</fullName>
    </alternativeName>
</protein>
<sequence length="165" mass="18118">MIIEGPVIKFGDKIDTDIIIPARYLKYTDPQYLAQHVMEPLDPEFYKKASKGVIIVAGKVFGMGSSREQAAIALKAAGVKAVVAESFARIFYRNAINNGLPVITLPNSTKEIDENSYVKIDVETGEILVGNKVLKGKGITEMALEILQAGGIMEYLKKMQTVNRN</sequence>
<feature type="chain" id="PRO_1000213372" description="3-isopropylmalate dehydratase small subunit">
    <location>
        <begin position="1"/>
        <end position="165"/>
    </location>
</feature>